<reference key="1">
    <citation type="journal article" date="2002" name="Plant Physiol.">
        <title>Expression of alpha-expansin and expansin-like genes in deepwater rice.</title>
        <authorList>
            <person name="Lee Y."/>
            <person name="Kende H."/>
        </authorList>
    </citation>
    <scope>NUCLEOTIDE SEQUENCE [GENOMIC DNA]</scope>
    <scope>TISSUE SPECIFICITY</scope>
</reference>
<reference key="2">
    <citation type="journal article" date="2005" name="Mol. Cells">
        <title>Characterization and transcriptional expression of the alpha-expansin gene family in rice.</title>
        <authorList>
            <person name="Shin J.-H."/>
            <person name="Jeong D.-H."/>
            <person name="Park M.C."/>
            <person name="An G."/>
        </authorList>
    </citation>
    <scope>NUCLEOTIDE SEQUENCE [MRNA]</scope>
    <scope>TISSUE SPECIFICITY</scope>
    <source>
        <strain>cv. Dongjin</strain>
    </source>
</reference>
<reference key="3">
    <citation type="journal article" date="2005" name="Nature">
        <title>The map-based sequence of the rice genome.</title>
        <authorList>
            <consortium name="International rice genome sequencing project (IRGSP)"/>
        </authorList>
    </citation>
    <scope>NUCLEOTIDE SEQUENCE [LARGE SCALE GENOMIC DNA]</scope>
    <source>
        <strain>cv. Nipponbare</strain>
    </source>
</reference>
<reference key="4">
    <citation type="journal article" date="2008" name="Nucleic Acids Res.">
        <title>The rice annotation project database (RAP-DB): 2008 update.</title>
        <authorList>
            <consortium name="The rice annotation project (RAP)"/>
        </authorList>
    </citation>
    <scope>GENOME REANNOTATION</scope>
    <source>
        <strain>cv. Nipponbare</strain>
    </source>
</reference>
<reference key="5">
    <citation type="journal article" date="2013" name="Rice">
        <title>Improvement of the Oryza sativa Nipponbare reference genome using next generation sequence and optical map data.</title>
        <authorList>
            <person name="Kawahara Y."/>
            <person name="de la Bastide M."/>
            <person name="Hamilton J.P."/>
            <person name="Kanamori H."/>
            <person name="McCombie W.R."/>
            <person name="Ouyang S."/>
            <person name="Schwartz D.C."/>
            <person name="Tanaka T."/>
            <person name="Wu J."/>
            <person name="Zhou S."/>
            <person name="Childs K.L."/>
            <person name="Davidson R.M."/>
            <person name="Lin H."/>
            <person name="Quesada-Ocampo L."/>
            <person name="Vaillancourt B."/>
            <person name="Sakai H."/>
            <person name="Lee S.S."/>
            <person name="Kim J."/>
            <person name="Numa H."/>
            <person name="Itoh T."/>
            <person name="Buell C.R."/>
            <person name="Matsumoto T."/>
        </authorList>
    </citation>
    <scope>GENOME REANNOTATION</scope>
    <source>
        <strain>cv. Nipponbare</strain>
    </source>
</reference>
<reference key="6">
    <citation type="journal article" date="2005" name="PLoS Biol.">
        <title>The genomes of Oryza sativa: a history of duplications.</title>
        <authorList>
            <person name="Yu J."/>
            <person name="Wang J."/>
            <person name="Lin W."/>
            <person name="Li S."/>
            <person name="Li H."/>
            <person name="Zhou J."/>
            <person name="Ni P."/>
            <person name="Dong W."/>
            <person name="Hu S."/>
            <person name="Zeng C."/>
            <person name="Zhang J."/>
            <person name="Zhang Y."/>
            <person name="Li R."/>
            <person name="Xu Z."/>
            <person name="Li S."/>
            <person name="Li X."/>
            <person name="Zheng H."/>
            <person name="Cong L."/>
            <person name="Lin L."/>
            <person name="Yin J."/>
            <person name="Geng J."/>
            <person name="Li G."/>
            <person name="Shi J."/>
            <person name="Liu J."/>
            <person name="Lv H."/>
            <person name="Li J."/>
            <person name="Wang J."/>
            <person name="Deng Y."/>
            <person name="Ran L."/>
            <person name="Shi X."/>
            <person name="Wang X."/>
            <person name="Wu Q."/>
            <person name="Li C."/>
            <person name="Ren X."/>
            <person name="Wang J."/>
            <person name="Wang X."/>
            <person name="Li D."/>
            <person name="Liu D."/>
            <person name="Zhang X."/>
            <person name="Ji Z."/>
            <person name="Zhao W."/>
            <person name="Sun Y."/>
            <person name="Zhang Z."/>
            <person name="Bao J."/>
            <person name="Han Y."/>
            <person name="Dong L."/>
            <person name="Ji J."/>
            <person name="Chen P."/>
            <person name="Wu S."/>
            <person name="Liu J."/>
            <person name="Xiao Y."/>
            <person name="Bu D."/>
            <person name="Tan J."/>
            <person name="Yang L."/>
            <person name="Ye C."/>
            <person name="Zhang J."/>
            <person name="Xu J."/>
            <person name="Zhou Y."/>
            <person name="Yu Y."/>
            <person name="Zhang B."/>
            <person name="Zhuang S."/>
            <person name="Wei H."/>
            <person name="Liu B."/>
            <person name="Lei M."/>
            <person name="Yu H."/>
            <person name="Li Y."/>
            <person name="Xu H."/>
            <person name="Wei S."/>
            <person name="He X."/>
            <person name="Fang L."/>
            <person name="Zhang Z."/>
            <person name="Zhang Y."/>
            <person name="Huang X."/>
            <person name="Su Z."/>
            <person name="Tong W."/>
            <person name="Li J."/>
            <person name="Tong Z."/>
            <person name="Li S."/>
            <person name="Ye J."/>
            <person name="Wang L."/>
            <person name="Fang L."/>
            <person name="Lei T."/>
            <person name="Chen C.-S."/>
            <person name="Chen H.-C."/>
            <person name="Xu Z."/>
            <person name="Li H."/>
            <person name="Huang H."/>
            <person name="Zhang F."/>
            <person name="Xu H."/>
            <person name="Li N."/>
            <person name="Zhao C."/>
            <person name="Li S."/>
            <person name="Dong L."/>
            <person name="Huang Y."/>
            <person name="Li L."/>
            <person name="Xi Y."/>
            <person name="Qi Q."/>
            <person name="Li W."/>
            <person name="Zhang B."/>
            <person name="Hu W."/>
            <person name="Zhang Y."/>
            <person name="Tian X."/>
            <person name="Jiao Y."/>
            <person name="Liang X."/>
            <person name="Jin J."/>
            <person name="Gao L."/>
            <person name="Zheng W."/>
            <person name="Hao B."/>
            <person name="Liu S.-M."/>
            <person name="Wang W."/>
            <person name="Yuan L."/>
            <person name="Cao M."/>
            <person name="McDermott J."/>
            <person name="Samudrala R."/>
            <person name="Wang J."/>
            <person name="Wong G.K.-S."/>
            <person name="Yang H."/>
        </authorList>
    </citation>
    <scope>NUCLEOTIDE SEQUENCE [LARGE SCALE GENOMIC DNA]</scope>
    <source>
        <strain>cv. Nipponbare</strain>
    </source>
</reference>
<reference key="7">
    <citation type="journal article" date="2004" name="Plant Mol. Biol.">
        <title>Nomenclature for members of the expansin superfamily of genes and proteins.</title>
        <authorList>
            <person name="Kende H."/>
            <person name="Bradford K.J."/>
            <person name="Brummell D.A."/>
            <person name="Cho H.-T."/>
            <person name="Cosgrove D.J."/>
            <person name="Fleming A.J."/>
            <person name="Gehring C."/>
            <person name="Lee Y."/>
            <person name="McQueen-Mason S.J."/>
            <person name="Rose J.K.C."/>
            <person name="Voesenek L.A.C."/>
        </authorList>
    </citation>
    <scope>NOMENCLATURE</scope>
</reference>
<proteinExistence type="evidence at transcript level"/>
<evidence type="ECO:0000250" key="1"/>
<evidence type="ECO:0000255" key="2"/>
<evidence type="ECO:0000255" key="3">
    <source>
        <dbReference type="PROSITE-ProRule" id="PRU00078"/>
    </source>
</evidence>
<evidence type="ECO:0000255" key="4">
    <source>
        <dbReference type="PROSITE-ProRule" id="PRU00079"/>
    </source>
</evidence>
<evidence type="ECO:0000269" key="5">
    <source>
    </source>
</evidence>
<evidence type="ECO:0000269" key="6">
    <source>
    </source>
</evidence>
<evidence type="ECO:0000305" key="7"/>
<evidence type="ECO:0000312" key="8">
    <source>
        <dbReference type="EMBL" id="EAZ22520.1"/>
    </source>
</evidence>
<dbReference type="EMBL" id="AF394549">
    <property type="protein sequence ID" value="AAL24485.1"/>
    <property type="molecule type" value="Genomic_DNA"/>
</dbReference>
<dbReference type="EMBL" id="DQ061055">
    <property type="protein sequence ID" value="AAY63546.1"/>
    <property type="molecule type" value="mRNA"/>
</dbReference>
<dbReference type="EMBL" id="AP005428">
    <property type="protein sequence ID" value="BAD28620.1"/>
    <property type="molecule type" value="Genomic_DNA"/>
</dbReference>
<dbReference type="EMBL" id="AP008208">
    <property type="protein sequence ID" value="BAF08424.1"/>
    <property type="molecule type" value="Genomic_DNA"/>
</dbReference>
<dbReference type="EMBL" id="AP014958">
    <property type="protein sequence ID" value="BAS78025.1"/>
    <property type="molecule type" value="Genomic_DNA"/>
</dbReference>
<dbReference type="EMBL" id="CM000139">
    <property type="protein sequence ID" value="EAZ22520.1"/>
    <property type="molecule type" value="Genomic_DNA"/>
</dbReference>
<dbReference type="RefSeq" id="XP_015625531.1">
    <property type="nucleotide sequence ID" value="XM_015770045.1"/>
</dbReference>
<dbReference type="SMR" id="Q4PR52"/>
<dbReference type="FunCoup" id="Q4PR52">
    <property type="interactions" value="15"/>
</dbReference>
<dbReference type="STRING" id="39947.Q4PR52"/>
<dbReference type="PaxDb" id="39947-Q4PR52"/>
<dbReference type="EnsemblPlants" id="Os02t0267200-00">
    <property type="protein sequence ID" value="Os02t0267200-00"/>
    <property type="gene ID" value="Os02g0267200"/>
</dbReference>
<dbReference type="Gramene" id="Os02t0267200-00">
    <property type="protein sequence ID" value="Os02t0267200-00"/>
    <property type="gene ID" value="Os02g0267200"/>
</dbReference>
<dbReference type="KEGG" id="dosa:Os02g0267200"/>
<dbReference type="eggNOG" id="ENOG502R56D">
    <property type="taxonomic scope" value="Eukaryota"/>
</dbReference>
<dbReference type="HOGENOM" id="CLU_027462_0_1_1"/>
<dbReference type="InParanoid" id="Q4PR52"/>
<dbReference type="OMA" id="FAVNGHD"/>
<dbReference type="OrthoDB" id="5823761at2759"/>
<dbReference type="Proteomes" id="UP000000763">
    <property type="component" value="Chromosome 2"/>
</dbReference>
<dbReference type="Proteomes" id="UP000007752">
    <property type="component" value="Chromosome 2"/>
</dbReference>
<dbReference type="Proteomes" id="UP000059680">
    <property type="component" value="Chromosome 2"/>
</dbReference>
<dbReference type="GO" id="GO:0005576">
    <property type="term" value="C:extracellular region"/>
    <property type="evidence" value="ECO:0007669"/>
    <property type="project" value="UniProtKB-KW"/>
</dbReference>
<dbReference type="GO" id="GO:0016020">
    <property type="term" value="C:membrane"/>
    <property type="evidence" value="ECO:0007669"/>
    <property type="project" value="UniProtKB-SubCell"/>
</dbReference>
<dbReference type="GO" id="GO:0009828">
    <property type="term" value="P:plant-type cell wall loosening"/>
    <property type="evidence" value="ECO:0000250"/>
    <property type="project" value="UniProtKB"/>
</dbReference>
<dbReference type="CDD" id="cd22274">
    <property type="entry name" value="DPBB_EXPA_N"/>
    <property type="match status" value="1"/>
</dbReference>
<dbReference type="FunFam" id="2.40.40.10:FF:000001">
    <property type="entry name" value="Expansin"/>
    <property type="match status" value="1"/>
</dbReference>
<dbReference type="Gene3D" id="2.60.40.760">
    <property type="entry name" value="Expansin, cellulose-binding-like domain"/>
    <property type="match status" value="1"/>
</dbReference>
<dbReference type="Gene3D" id="2.40.40.10">
    <property type="entry name" value="RlpA-like domain"/>
    <property type="match status" value="1"/>
</dbReference>
<dbReference type="InterPro" id="IPR007118">
    <property type="entry name" value="Expan_Lol_pI"/>
</dbReference>
<dbReference type="InterPro" id="IPR002963">
    <property type="entry name" value="Expansin"/>
</dbReference>
<dbReference type="InterPro" id="IPR007112">
    <property type="entry name" value="Expansin/allergen_DPBB_dom"/>
</dbReference>
<dbReference type="InterPro" id="IPR007117">
    <property type="entry name" value="Expansin_CBD"/>
</dbReference>
<dbReference type="InterPro" id="IPR036749">
    <property type="entry name" value="Expansin_CBD_sf"/>
</dbReference>
<dbReference type="InterPro" id="IPR009009">
    <property type="entry name" value="RlpA-like_DPBB"/>
</dbReference>
<dbReference type="InterPro" id="IPR036908">
    <property type="entry name" value="RlpA-like_sf"/>
</dbReference>
<dbReference type="PANTHER" id="PTHR31867">
    <property type="entry name" value="EXPANSIN-A15"/>
    <property type="match status" value="1"/>
</dbReference>
<dbReference type="Pfam" id="PF03330">
    <property type="entry name" value="DPBB_1"/>
    <property type="match status" value="1"/>
</dbReference>
<dbReference type="Pfam" id="PF01357">
    <property type="entry name" value="Expansin_C"/>
    <property type="match status" value="1"/>
</dbReference>
<dbReference type="PRINTS" id="PR01226">
    <property type="entry name" value="EXPANSIN"/>
</dbReference>
<dbReference type="PRINTS" id="PR01225">
    <property type="entry name" value="EXPANSNFAMLY"/>
</dbReference>
<dbReference type="SMART" id="SM00837">
    <property type="entry name" value="DPBB_1"/>
    <property type="match status" value="1"/>
</dbReference>
<dbReference type="SUPFAM" id="SSF50685">
    <property type="entry name" value="Barwin-like endoglucanases"/>
    <property type="match status" value="1"/>
</dbReference>
<dbReference type="SUPFAM" id="SSF49590">
    <property type="entry name" value="PHL pollen allergen"/>
    <property type="match status" value="1"/>
</dbReference>
<dbReference type="PROSITE" id="PS50843">
    <property type="entry name" value="EXPANSIN_CBD"/>
    <property type="match status" value="1"/>
</dbReference>
<dbReference type="PROSITE" id="PS50842">
    <property type="entry name" value="EXPANSIN_EG45"/>
    <property type="match status" value="1"/>
</dbReference>
<organism>
    <name type="scientific">Oryza sativa subsp. japonica</name>
    <name type="common">Rice</name>
    <dbReference type="NCBI Taxonomy" id="39947"/>
    <lineage>
        <taxon>Eukaryota</taxon>
        <taxon>Viridiplantae</taxon>
        <taxon>Streptophyta</taxon>
        <taxon>Embryophyta</taxon>
        <taxon>Tracheophyta</taxon>
        <taxon>Spermatophyta</taxon>
        <taxon>Magnoliopsida</taxon>
        <taxon>Liliopsida</taxon>
        <taxon>Poales</taxon>
        <taxon>Poaceae</taxon>
        <taxon>BOP clade</taxon>
        <taxon>Oryzoideae</taxon>
        <taxon>Oryzeae</taxon>
        <taxon>Oryzinae</taxon>
        <taxon>Oryza</taxon>
        <taxon>Oryza sativa</taxon>
    </lineage>
</organism>
<comment type="function">
    <text evidence="1">May cause loosening and extension of plant cell walls by disrupting non-covalent bonding between cellulose microfibrils and matrix glucans. No enzymatic activity has been found. May be required for rapid internodal elongation in deepwater rice during submergence (By similarity).</text>
</comment>
<comment type="subcellular location">
    <subcellularLocation>
        <location evidence="1">Secreted</location>
        <location evidence="1">Cell wall</location>
    </subcellularLocation>
    <subcellularLocation>
        <location evidence="1">Membrane</location>
        <topology evidence="1">Peripheral membrane protein</topology>
    </subcellularLocation>
</comment>
<comment type="tissue specificity">
    <text evidence="5 6">Expressed in roots and flowers.</text>
</comment>
<comment type="similarity">
    <text evidence="7">Belongs to the expansin family. Expansin A subfamily.</text>
</comment>
<comment type="online information" name="EXPANSIN homepage">
    <link uri="https://www.dept.psu.edu/biology/groups/expansins/index.htm"/>
</comment>
<sequence>MAGVARMLAAVVCAIMPAAAMAAGGVGALEPSGWVRAHATFYGGADASGTMGGACGYGNLYAQGYGTRTAALSTALFNDGLACGQCYKLVCDRKTDRTWCKPGVSVTITATNFCPPNWDLPSDSGGWCNPPRPHFDMAQPAWEKIGIYRGGIIPVIYQRVPCMKKGGVRFTINGHDYFQLVLLTNVGAAGSIKAMDVKGSKSPDWMAMAHNWGAQWHSLAYLTGQGLSFRVTITDGQTLVFPNVVRPGWRFGQTFASNIQFK</sequence>
<name>EXP13_ORYSJ</name>
<accession>Q4PR52</accession>
<accession>Q0E264</accession>
<accession>Q6ERV0</accession>
<accession>Q946I8</accession>
<protein>
    <recommendedName>
        <fullName>Expansin-A13</fullName>
    </recommendedName>
    <alternativeName>
        <fullName>Alpha-expansin-13</fullName>
    </alternativeName>
    <alternativeName>
        <fullName>OsEXP13</fullName>
    </alternativeName>
    <alternativeName>
        <fullName>OsEXPA13</fullName>
    </alternativeName>
    <alternativeName>
        <fullName>OsaEXPa1.13</fullName>
    </alternativeName>
</protein>
<keyword id="KW-0134">Cell wall</keyword>
<keyword id="KW-0961">Cell wall biogenesis/degradation</keyword>
<keyword id="KW-0472">Membrane</keyword>
<keyword id="KW-1185">Reference proteome</keyword>
<keyword id="KW-0964">Secreted</keyword>
<keyword id="KW-0732">Signal</keyword>
<feature type="signal peptide" evidence="2">
    <location>
        <begin position="1"/>
        <end position="22"/>
    </location>
</feature>
<feature type="chain" id="PRO_0000251992" description="Expansin-A13">
    <location>
        <begin position="23"/>
        <end position="262"/>
    </location>
</feature>
<feature type="domain" description="Expansin-like EG45" evidence="4">
    <location>
        <begin position="52"/>
        <end position="167"/>
    </location>
</feature>
<feature type="domain" description="Expansin-like CBD" evidence="3">
    <location>
        <begin position="177"/>
        <end position="257"/>
    </location>
</feature>
<feature type="sequence conflict" description="In Ref. 2; AAY63546." evidence="7" ref="2">
    <original>F</original>
    <variation>L</variation>
    <location>
        <position position="255"/>
    </location>
</feature>
<gene>
    <name type="primary">EXPA13</name>
    <name type="synonym">EXP13</name>
    <name type="ordered locus">Os02g0267200</name>
    <name type="ordered locus">LOC_Os02g16730</name>
    <name evidence="8" type="ORF">OsJ_06183</name>
    <name type="ORF">P0693E08.4</name>
</gene>